<organism>
    <name type="scientific">Yersinia pestis bv. Antiqua (strain Angola)</name>
    <dbReference type="NCBI Taxonomy" id="349746"/>
    <lineage>
        <taxon>Bacteria</taxon>
        <taxon>Pseudomonadati</taxon>
        <taxon>Pseudomonadota</taxon>
        <taxon>Gammaproteobacteria</taxon>
        <taxon>Enterobacterales</taxon>
        <taxon>Yersiniaceae</taxon>
        <taxon>Yersinia</taxon>
    </lineage>
</organism>
<dbReference type="EC" id="6.3.2.-" evidence="1"/>
<dbReference type="EMBL" id="CP000901">
    <property type="protein sequence ID" value="ABX87837.1"/>
    <property type="molecule type" value="Genomic_DNA"/>
</dbReference>
<dbReference type="RefSeq" id="WP_002209139.1">
    <property type="nucleotide sequence ID" value="NZ_CP009935.1"/>
</dbReference>
<dbReference type="SMR" id="A9QYP2"/>
<dbReference type="GeneID" id="57974246"/>
<dbReference type="KEGG" id="ypg:YpAngola_A0712"/>
<dbReference type="PATRIC" id="fig|349746.12.peg.1659"/>
<dbReference type="GO" id="GO:0005829">
    <property type="term" value="C:cytosol"/>
    <property type="evidence" value="ECO:0007669"/>
    <property type="project" value="TreeGrafter"/>
</dbReference>
<dbReference type="GO" id="GO:0016880">
    <property type="term" value="F:acid-ammonia (or amide) ligase activity"/>
    <property type="evidence" value="ECO:0007669"/>
    <property type="project" value="UniProtKB-UniRule"/>
</dbReference>
<dbReference type="GO" id="GO:0005524">
    <property type="term" value="F:ATP binding"/>
    <property type="evidence" value="ECO:0007669"/>
    <property type="project" value="UniProtKB-UniRule"/>
</dbReference>
<dbReference type="GO" id="GO:0004824">
    <property type="term" value="F:lysine-tRNA ligase activity"/>
    <property type="evidence" value="ECO:0007669"/>
    <property type="project" value="InterPro"/>
</dbReference>
<dbReference type="GO" id="GO:0000049">
    <property type="term" value="F:tRNA binding"/>
    <property type="evidence" value="ECO:0007669"/>
    <property type="project" value="TreeGrafter"/>
</dbReference>
<dbReference type="GO" id="GO:0006430">
    <property type="term" value="P:lysyl-tRNA aminoacylation"/>
    <property type="evidence" value="ECO:0007669"/>
    <property type="project" value="InterPro"/>
</dbReference>
<dbReference type="FunFam" id="3.30.930.10:FF:000017">
    <property type="entry name" value="Elongation factor P--(R)-beta-lysine ligase"/>
    <property type="match status" value="1"/>
</dbReference>
<dbReference type="Gene3D" id="3.30.930.10">
    <property type="entry name" value="Bira Bifunctional Protein, Domain 2"/>
    <property type="match status" value="1"/>
</dbReference>
<dbReference type="HAMAP" id="MF_00174">
    <property type="entry name" value="EF_P_modif_A"/>
    <property type="match status" value="1"/>
</dbReference>
<dbReference type="InterPro" id="IPR004364">
    <property type="entry name" value="Aa-tRNA-synt_II"/>
</dbReference>
<dbReference type="InterPro" id="IPR006195">
    <property type="entry name" value="aa-tRNA-synth_II"/>
</dbReference>
<dbReference type="InterPro" id="IPR045864">
    <property type="entry name" value="aa-tRNA-synth_II/BPL/LPL"/>
</dbReference>
<dbReference type="InterPro" id="IPR004525">
    <property type="entry name" value="EpmA"/>
</dbReference>
<dbReference type="InterPro" id="IPR018149">
    <property type="entry name" value="Lys-tRNA-synth_II_C"/>
</dbReference>
<dbReference type="NCBIfam" id="TIGR00462">
    <property type="entry name" value="genX"/>
    <property type="match status" value="1"/>
</dbReference>
<dbReference type="NCBIfam" id="NF006828">
    <property type="entry name" value="PRK09350.1"/>
    <property type="match status" value="1"/>
</dbReference>
<dbReference type="PANTHER" id="PTHR42918:SF6">
    <property type="entry name" value="ELONGATION FACTOR P--(R)-BETA-LYSINE LIGASE"/>
    <property type="match status" value="1"/>
</dbReference>
<dbReference type="PANTHER" id="PTHR42918">
    <property type="entry name" value="LYSYL-TRNA SYNTHETASE"/>
    <property type="match status" value="1"/>
</dbReference>
<dbReference type="Pfam" id="PF00152">
    <property type="entry name" value="tRNA-synt_2"/>
    <property type="match status" value="1"/>
</dbReference>
<dbReference type="PRINTS" id="PR00982">
    <property type="entry name" value="TRNASYNTHLYS"/>
</dbReference>
<dbReference type="SUPFAM" id="SSF55681">
    <property type="entry name" value="Class II aaRS and biotin synthetases"/>
    <property type="match status" value="1"/>
</dbReference>
<dbReference type="PROSITE" id="PS50862">
    <property type="entry name" value="AA_TRNA_LIGASE_II"/>
    <property type="match status" value="1"/>
</dbReference>
<proteinExistence type="inferred from homology"/>
<reference key="1">
    <citation type="journal article" date="2010" name="J. Bacteriol.">
        <title>Genome sequence of the deep-rooted Yersinia pestis strain Angola reveals new insights into the evolution and pangenome of the plague bacterium.</title>
        <authorList>
            <person name="Eppinger M."/>
            <person name="Worsham P.L."/>
            <person name="Nikolich M.P."/>
            <person name="Riley D.R."/>
            <person name="Sebastian Y."/>
            <person name="Mou S."/>
            <person name="Achtman M."/>
            <person name="Lindler L.E."/>
            <person name="Ravel J."/>
        </authorList>
    </citation>
    <scope>NUCLEOTIDE SEQUENCE [LARGE SCALE GENOMIC DNA]</scope>
    <source>
        <strain>Angola</strain>
    </source>
</reference>
<gene>
    <name evidence="1" type="primary">epmA</name>
    <name type="synonym">yjeA</name>
    <name type="ordered locus">YpAngola_A0712</name>
</gene>
<protein>
    <recommendedName>
        <fullName evidence="1">Elongation factor P--(R)-beta-lysine ligase</fullName>
        <shortName evidence="1">EF-P--(R)-beta-lysine ligase</shortName>
        <ecNumber evidence="1">6.3.2.-</ecNumber>
    </recommendedName>
    <alternativeName>
        <fullName evidence="1">EF-P post-translational modification enzyme A</fullName>
    </alternativeName>
    <alternativeName>
        <fullName evidence="1">EF-P-lysine lysyltransferase</fullName>
    </alternativeName>
</protein>
<sequence length="325" mass="36700">MSDTASWQPSAPIANLLKRAAIMAEIRRFFADRGVLEVETPTMSQATVTDIHLVPFETRFVGPGAADGLTLYMMTSPEYHMKRLLAAGSGPIYQLGRSFRNEEAGRYHNPEFTMLEWYRPHYDMYRLMNEVDDLLQQILDCNSAETLSYQQAFLRHLNIDPLSAEKAQLREVAAKLDLSNIADTEEDRDTLLQLLFTVGVEPYIGRDKPAFIYHFPASQASLAEISTEDHRVAERFEVYFKGIELANGFRELTDGDEQLQRFEQDNRNRAKRGLPQNPIDMNLIAALKQGLPDCSGVALGVDRLVMLALNAERLSDVIAFPVNIA</sequence>
<accession>A9QYP2</accession>
<keyword id="KW-0067">ATP-binding</keyword>
<keyword id="KW-0436">Ligase</keyword>
<keyword id="KW-0547">Nucleotide-binding</keyword>
<feature type="chain" id="PRO_1000097914" description="Elongation factor P--(R)-beta-lysine ligase">
    <location>
        <begin position="1"/>
        <end position="325"/>
    </location>
</feature>
<feature type="binding site" evidence="1">
    <location>
        <begin position="76"/>
        <end position="78"/>
    </location>
    <ligand>
        <name>substrate</name>
    </ligand>
</feature>
<feature type="binding site" evidence="1">
    <location>
        <begin position="100"/>
        <end position="102"/>
    </location>
    <ligand>
        <name>ATP</name>
        <dbReference type="ChEBI" id="CHEBI:30616"/>
    </ligand>
</feature>
<feature type="binding site" evidence="1">
    <location>
        <position position="109"/>
    </location>
    <ligand>
        <name>ATP</name>
        <dbReference type="ChEBI" id="CHEBI:30616"/>
    </ligand>
</feature>
<feature type="binding site" evidence="1">
    <location>
        <position position="118"/>
    </location>
    <ligand>
        <name>substrate</name>
    </ligand>
</feature>
<feature type="binding site" evidence="1">
    <location>
        <begin position="244"/>
        <end position="245"/>
    </location>
    <ligand>
        <name>ATP</name>
        <dbReference type="ChEBI" id="CHEBI:30616"/>
    </ligand>
</feature>
<feature type="binding site" evidence="1">
    <location>
        <position position="251"/>
    </location>
    <ligand>
        <name>substrate</name>
    </ligand>
</feature>
<feature type="binding site" evidence="1">
    <location>
        <position position="300"/>
    </location>
    <ligand>
        <name>ATP</name>
        <dbReference type="ChEBI" id="CHEBI:30616"/>
    </ligand>
</feature>
<name>EPMA_YERPG</name>
<comment type="function">
    <text evidence="1">With EpmB is involved in the beta-lysylation step of the post-translational modification of translation elongation factor P (EF-P). Catalyzes the ATP-dependent activation of (R)-beta-lysine produced by EpmB, forming a lysyl-adenylate, from which the beta-lysyl moiety is then transferred to the epsilon-amino group of a conserved specific lysine residue in EF-P.</text>
</comment>
<comment type="catalytic activity">
    <reaction evidence="1">
        <text>D-beta-lysine + L-lysyl-[protein] + ATP = N(6)-((3R)-3,6-diaminohexanoyl)-L-lysyl-[protein] + AMP + diphosphate + H(+)</text>
        <dbReference type="Rhea" id="RHEA:83435"/>
        <dbReference type="Rhea" id="RHEA-COMP:9752"/>
        <dbReference type="Rhea" id="RHEA-COMP:20131"/>
        <dbReference type="ChEBI" id="CHEBI:15378"/>
        <dbReference type="ChEBI" id="CHEBI:29969"/>
        <dbReference type="ChEBI" id="CHEBI:30616"/>
        <dbReference type="ChEBI" id="CHEBI:33019"/>
        <dbReference type="ChEBI" id="CHEBI:84138"/>
        <dbReference type="ChEBI" id="CHEBI:156053"/>
        <dbReference type="ChEBI" id="CHEBI:456215"/>
    </reaction>
    <physiologicalReaction direction="left-to-right" evidence="1">
        <dbReference type="Rhea" id="RHEA:83436"/>
    </physiologicalReaction>
</comment>
<comment type="subunit">
    <text evidence="1">Homodimer.</text>
</comment>
<comment type="similarity">
    <text evidence="1">Belongs to the class-II aminoacyl-tRNA synthetase family. EpmA subfamily.</text>
</comment>
<evidence type="ECO:0000255" key="1">
    <source>
        <dbReference type="HAMAP-Rule" id="MF_00174"/>
    </source>
</evidence>